<feature type="chain" id="PRO_0000129310" description="Large ribosomal subunit protein uL4">
    <location>
        <begin position="1"/>
        <end position="200"/>
    </location>
</feature>
<feature type="region of interest" description="Disordered" evidence="2">
    <location>
        <begin position="42"/>
        <end position="65"/>
    </location>
</feature>
<evidence type="ECO:0000255" key="1">
    <source>
        <dbReference type="HAMAP-Rule" id="MF_01328"/>
    </source>
</evidence>
<evidence type="ECO:0000256" key="2">
    <source>
        <dbReference type="SAM" id="MobiDB-lite"/>
    </source>
</evidence>
<evidence type="ECO:0000305" key="3"/>
<keyword id="KW-0687">Ribonucleoprotein</keyword>
<keyword id="KW-0689">Ribosomal protein</keyword>
<keyword id="KW-0694">RNA-binding</keyword>
<keyword id="KW-0699">rRNA-binding</keyword>
<dbReference type="EMBL" id="AE016795">
    <property type="protein sequence ID" value="AAO09269.1"/>
    <property type="molecule type" value="Genomic_DNA"/>
</dbReference>
<dbReference type="RefSeq" id="WP_011078830.1">
    <property type="nucleotide sequence ID" value="NC_004459.3"/>
</dbReference>
<dbReference type="SMR" id="Q8DE40"/>
<dbReference type="GeneID" id="93895065"/>
<dbReference type="KEGG" id="vvu:VV1_0761"/>
<dbReference type="HOGENOM" id="CLU_041575_5_2_6"/>
<dbReference type="Proteomes" id="UP000002275">
    <property type="component" value="Chromosome 1"/>
</dbReference>
<dbReference type="GO" id="GO:1990904">
    <property type="term" value="C:ribonucleoprotein complex"/>
    <property type="evidence" value="ECO:0007669"/>
    <property type="project" value="UniProtKB-KW"/>
</dbReference>
<dbReference type="GO" id="GO:0005840">
    <property type="term" value="C:ribosome"/>
    <property type="evidence" value="ECO:0007669"/>
    <property type="project" value="UniProtKB-KW"/>
</dbReference>
<dbReference type="GO" id="GO:0019843">
    <property type="term" value="F:rRNA binding"/>
    <property type="evidence" value="ECO:0007669"/>
    <property type="project" value="UniProtKB-UniRule"/>
</dbReference>
<dbReference type="GO" id="GO:0003735">
    <property type="term" value="F:structural constituent of ribosome"/>
    <property type="evidence" value="ECO:0007669"/>
    <property type="project" value="InterPro"/>
</dbReference>
<dbReference type="GO" id="GO:0006412">
    <property type="term" value="P:translation"/>
    <property type="evidence" value="ECO:0007669"/>
    <property type="project" value="UniProtKB-UniRule"/>
</dbReference>
<dbReference type="FunFam" id="3.40.1370.10:FF:000001">
    <property type="entry name" value="50S ribosomal protein L4"/>
    <property type="match status" value="1"/>
</dbReference>
<dbReference type="Gene3D" id="3.40.1370.10">
    <property type="match status" value="1"/>
</dbReference>
<dbReference type="HAMAP" id="MF_01328_B">
    <property type="entry name" value="Ribosomal_uL4_B"/>
    <property type="match status" value="1"/>
</dbReference>
<dbReference type="InterPro" id="IPR002136">
    <property type="entry name" value="Ribosomal_uL4"/>
</dbReference>
<dbReference type="InterPro" id="IPR013005">
    <property type="entry name" value="Ribosomal_uL4-like"/>
</dbReference>
<dbReference type="InterPro" id="IPR023574">
    <property type="entry name" value="Ribosomal_uL4_dom_sf"/>
</dbReference>
<dbReference type="NCBIfam" id="TIGR03953">
    <property type="entry name" value="rplD_bact"/>
    <property type="match status" value="1"/>
</dbReference>
<dbReference type="PANTHER" id="PTHR10746">
    <property type="entry name" value="50S RIBOSOMAL PROTEIN L4"/>
    <property type="match status" value="1"/>
</dbReference>
<dbReference type="PANTHER" id="PTHR10746:SF6">
    <property type="entry name" value="LARGE RIBOSOMAL SUBUNIT PROTEIN UL4M"/>
    <property type="match status" value="1"/>
</dbReference>
<dbReference type="Pfam" id="PF00573">
    <property type="entry name" value="Ribosomal_L4"/>
    <property type="match status" value="1"/>
</dbReference>
<dbReference type="SUPFAM" id="SSF52166">
    <property type="entry name" value="Ribosomal protein L4"/>
    <property type="match status" value="1"/>
</dbReference>
<gene>
    <name evidence="1" type="primary">rplD</name>
    <name type="ordered locus">VV1_0761</name>
</gene>
<sequence>MELMVKGAAALTVSEATFGREFNEALVHQVVVAYAAGARQGTRAQKTRSEVSGGGAKPWRQKGTGRARAGTIRSPLWRTGGVTFAAKPQDHSQKVNKKMYRGAMKSILSELVRQERLIVVDNFSVEAPKTKELVAKLKELELNDVLIVTGEVDENLFLAARNLYKVDARDVAGIDPVSLIAFNKVLMTADAVKQVEEMLA</sequence>
<name>RL4_VIBVU</name>
<reference key="1">
    <citation type="submission" date="2002-12" db="EMBL/GenBank/DDBJ databases">
        <title>Complete genome sequence of Vibrio vulnificus CMCP6.</title>
        <authorList>
            <person name="Rhee J.H."/>
            <person name="Kim S.Y."/>
            <person name="Chung S.S."/>
            <person name="Kim J.J."/>
            <person name="Moon Y.H."/>
            <person name="Jeong H."/>
            <person name="Choy H.E."/>
        </authorList>
    </citation>
    <scope>NUCLEOTIDE SEQUENCE [LARGE SCALE GENOMIC DNA]</scope>
    <source>
        <strain>CMCP6</strain>
    </source>
</reference>
<protein>
    <recommendedName>
        <fullName evidence="1">Large ribosomal subunit protein uL4</fullName>
    </recommendedName>
    <alternativeName>
        <fullName evidence="3">50S ribosomal protein L4</fullName>
    </alternativeName>
</protein>
<organism>
    <name type="scientific">Vibrio vulnificus (strain CMCP6)</name>
    <dbReference type="NCBI Taxonomy" id="216895"/>
    <lineage>
        <taxon>Bacteria</taxon>
        <taxon>Pseudomonadati</taxon>
        <taxon>Pseudomonadota</taxon>
        <taxon>Gammaproteobacteria</taxon>
        <taxon>Vibrionales</taxon>
        <taxon>Vibrionaceae</taxon>
        <taxon>Vibrio</taxon>
    </lineage>
</organism>
<accession>Q8DE40</accession>
<comment type="function">
    <text evidence="1">One of the primary rRNA binding proteins, this protein initially binds near the 5'-end of the 23S rRNA. It is important during the early stages of 50S assembly. It makes multiple contacts with different domains of the 23S rRNA in the assembled 50S subunit and ribosome.</text>
</comment>
<comment type="function">
    <text evidence="1">Forms part of the polypeptide exit tunnel.</text>
</comment>
<comment type="subunit">
    <text evidence="1">Part of the 50S ribosomal subunit.</text>
</comment>
<comment type="similarity">
    <text evidence="1">Belongs to the universal ribosomal protein uL4 family.</text>
</comment>
<proteinExistence type="inferred from homology"/>